<evidence type="ECO:0000255" key="1">
    <source>
        <dbReference type="HAMAP-Rule" id="MF_00289"/>
    </source>
</evidence>
<feature type="chain" id="PRO_0000124176" description="Proteasome subunit alpha">
    <location>
        <begin position="1"/>
        <end position="249"/>
    </location>
</feature>
<protein>
    <recommendedName>
        <fullName evidence="1">Proteasome subunit alpha</fullName>
    </recommendedName>
    <alternativeName>
        <fullName evidence="1">20S proteasome alpha subunit</fullName>
    </alternativeName>
    <alternativeName>
        <fullName evidence="1">Proteasome core protein PsmA</fullName>
    </alternativeName>
</protein>
<gene>
    <name evidence="1" type="primary">psmA</name>
    <name type="ordered locus">MM_2620</name>
</gene>
<sequence>MQMAPQMGYDRAITVFSPDGRLFQVEYAREAVKRGTTAVGIKAADGVVLLVDKRITSRLVEAESIEKIFQIDDHIGAATSGLVADARSLVDRARVEAQVNRVSYDELIGVEVISKKICDHKQTYTQYGGVRPYGTALLIAGVDDNKPRLFETDPSGALLEYKATAIGAGRNAVVEVFEADYREDMNIDAAILLGMDALYKAAEGKFDAGTLEVGVVSLEDKKFRKLGPEEVENYVHQILEKHKGNENKE</sequence>
<organism>
    <name type="scientific">Methanosarcina mazei (strain ATCC BAA-159 / DSM 3647 / Goe1 / Go1 / JCM 11833 / OCM 88)</name>
    <name type="common">Methanosarcina frisia</name>
    <dbReference type="NCBI Taxonomy" id="192952"/>
    <lineage>
        <taxon>Archaea</taxon>
        <taxon>Methanobacteriati</taxon>
        <taxon>Methanobacteriota</taxon>
        <taxon>Stenosarchaea group</taxon>
        <taxon>Methanomicrobia</taxon>
        <taxon>Methanosarcinales</taxon>
        <taxon>Methanosarcinaceae</taxon>
        <taxon>Methanosarcina</taxon>
    </lineage>
</organism>
<accession>Q8PTU1</accession>
<proteinExistence type="inferred from homology"/>
<comment type="function">
    <text evidence="1">Component of the proteasome core, a large protease complex with broad specificity involved in protein degradation.</text>
</comment>
<comment type="activity regulation">
    <text evidence="1">The formation of the proteasomal ATPase PAN-20S proteasome complex, via the docking of the C-termini of PAN into the intersubunit pockets in the alpha-rings, triggers opening of the gate for substrate entry. Interconversion between the open-gate and close-gate conformations leads to a dynamic regulation of the 20S proteasome proteolysis activity.</text>
</comment>
<comment type="subunit">
    <text evidence="1">The 20S proteasome core is composed of 14 alpha and 14 beta subunits that assemble into four stacked heptameric rings, resulting in a barrel-shaped structure. The two inner rings, each composed of seven catalytic beta subunits, are sandwiched by two outer rings, each composed of seven alpha subunits. The catalytic chamber with the active sites is on the inside of the barrel. Has a gated structure, the ends of the cylinder being occluded by the N-termini of the alpha-subunits. Is capped at one or both ends by the proteasome regulatory ATPase, PAN.</text>
</comment>
<comment type="subcellular location">
    <subcellularLocation>
        <location evidence="1">Cytoplasm</location>
    </subcellularLocation>
</comment>
<comment type="similarity">
    <text evidence="1">Belongs to the peptidase T1A family.</text>
</comment>
<name>PSA_METMA</name>
<reference key="1">
    <citation type="journal article" date="2002" name="J. Mol. Microbiol. Biotechnol.">
        <title>The genome of Methanosarcina mazei: evidence for lateral gene transfer between Bacteria and Archaea.</title>
        <authorList>
            <person name="Deppenmeier U."/>
            <person name="Johann A."/>
            <person name="Hartsch T."/>
            <person name="Merkl R."/>
            <person name="Schmitz R.A."/>
            <person name="Martinez-Arias R."/>
            <person name="Henne A."/>
            <person name="Wiezer A."/>
            <person name="Baeumer S."/>
            <person name="Jacobi C."/>
            <person name="Brueggemann H."/>
            <person name="Lienard T."/>
            <person name="Christmann A."/>
            <person name="Boemecke M."/>
            <person name="Steckel S."/>
            <person name="Bhattacharyya A."/>
            <person name="Lykidis A."/>
            <person name="Overbeek R."/>
            <person name="Klenk H.-P."/>
            <person name="Gunsalus R.P."/>
            <person name="Fritz H.-J."/>
            <person name="Gottschalk G."/>
        </authorList>
    </citation>
    <scope>NUCLEOTIDE SEQUENCE [LARGE SCALE GENOMIC DNA]</scope>
    <source>
        <strain>ATCC BAA-159 / DSM 3647 / Goe1 / Go1 / JCM 11833 / OCM 88</strain>
    </source>
</reference>
<dbReference type="EMBL" id="AE008384">
    <property type="protein sequence ID" value="AAM32316.1"/>
    <property type="molecule type" value="Genomic_DNA"/>
</dbReference>
<dbReference type="RefSeq" id="WP_011034533.1">
    <property type="nucleotide sequence ID" value="NC_003901.1"/>
</dbReference>
<dbReference type="SMR" id="Q8PTU1"/>
<dbReference type="GeneID" id="82161705"/>
<dbReference type="KEGG" id="mma:MM_2620"/>
<dbReference type="PATRIC" id="fig|192952.21.peg.3014"/>
<dbReference type="eggNOG" id="arCOG00971">
    <property type="taxonomic scope" value="Archaea"/>
</dbReference>
<dbReference type="HOGENOM" id="CLU_035750_4_1_2"/>
<dbReference type="Proteomes" id="UP000000595">
    <property type="component" value="Chromosome"/>
</dbReference>
<dbReference type="GO" id="GO:0005737">
    <property type="term" value="C:cytoplasm"/>
    <property type="evidence" value="ECO:0007669"/>
    <property type="project" value="UniProtKB-SubCell"/>
</dbReference>
<dbReference type="GO" id="GO:0019773">
    <property type="term" value="C:proteasome core complex, alpha-subunit complex"/>
    <property type="evidence" value="ECO:0000250"/>
    <property type="project" value="UniProtKB"/>
</dbReference>
<dbReference type="GO" id="GO:0004298">
    <property type="term" value="F:threonine-type endopeptidase activity"/>
    <property type="evidence" value="ECO:0007669"/>
    <property type="project" value="InterPro"/>
</dbReference>
<dbReference type="GO" id="GO:0010498">
    <property type="term" value="P:proteasomal protein catabolic process"/>
    <property type="evidence" value="ECO:0007669"/>
    <property type="project" value="UniProtKB-UniRule"/>
</dbReference>
<dbReference type="GO" id="GO:0006511">
    <property type="term" value="P:ubiquitin-dependent protein catabolic process"/>
    <property type="evidence" value="ECO:0007669"/>
    <property type="project" value="InterPro"/>
</dbReference>
<dbReference type="CDD" id="cd03756">
    <property type="entry name" value="proteasome_alpha_archeal"/>
    <property type="match status" value="1"/>
</dbReference>
<dbReference type="FunFam" id="3.60.20.10:FF:000004">
    <property type="entry name" value="Proteasome subunit alpha type-4"/>
    <property type="match status" value="1"/>
</dbReference>
<dbReference type="Gene3D" id="3.60.20.10">
    <property type="entry name" value="Glutamine Phosphoribosylpyrophosphate, subunit 1, domain 1"/>
    <property type="match status" value="1"/>
</dbReference>
<dbReference type="HAMAP" id="MF_00289_A">
    <property type="entry name" value="Proteasome_A_A"/>
    <property type="match status" value="1"/>
</dbReference>
<dbReference type="InterPro" id="IPR029055">
    <property type="entry name" value="Ntn_hydrolases_N"/>
</dbReference>
<dbReference type="InterPro" id="IPR050115">
    <property type="entry name" value="Proteasome_alpha"/>
</dbReference>
<dbReference type="InterPro" id="IPR023332">
    <property type="entry name" value="Proteasome_alpha-type"/>
</dbReference>
<dbReference type="InterPro" id="IPR019982">
    <property type="entry name" value="Proteasome_asu_arc"/>
</dbReference>
<dbReference type="InterPro" id="IPR000426">
    <property type="entry name" value="Proteasome_asu_N"/>
</dbReference>
<dbReference type="InterPro" id="IPR001353">
    <property type="entry name" value="Proteasome_sua/b"/>
</dbReference>
<dbReference type="NCBIfam" id="TIGR03633">
    <property type="entry name" value="arc_protsome_A"/>
    <property type="match status" value="1"/>
</dbReference>
<dbReference type="NCBIfam" id="NF003075">
    <property type="entry name" value="PRK03996.1"/>
    <property type="match status" value="1"/>
</dbReference>
<dbReference type="PANTHER" id="PTHR11599">
    <property type="entry name" value="PROTEASOME SUBUNIT ALPHA/BETA"/>
    <property type="match status" value="1"/>
</dbReference>
<dbReference type="Pfam" id="PF00227">
    <property type="entry name" value="Proteasome"/>
    <property type="match status" value="1"/>
</dbReference>
<dbReference type="Pfam" id="PF10584">
    <property type="entry name" value="Proteasome_A_N"/>
    <property type="match status" value="1"/>
</dbReference>
<dbReference type="SMART" id="SM00948">
    <property type="entry name" value="Proteasome_A_N"/>
    <property type="match status" value="1"/>
</dbReference>
<dbReference type="SUPFAM" id="SSF56235">
    <property type="entry name" value="N-terminal nucleophile aminohydrolases (Ntn hydrolases)"/>
    <property type="match status" value="1"/>
</dbReference>
<dbReference type="PROSITE" id="PS00388">
    <property type="entry name" value="PROTEASOME_ALPHA_1"/>
    <property type="match status" value="1"/>
</dbReference>
<dbReference type="PROSITE" id="PS51475">
    <property type="entry name" value="PROTEASOME_ALPHA_2"/>
    <property type="match status" value="1"/>
</dbReference>
<keyword id="KW-0963">Cytoplasm</keyword>
<keyword id="KW-0647">Proteasome</keyword>